<organism>
    <name type="scientific">Rhodopseudomonas palustris (strain HaA2)</name>
    <dbReference type="NCBI Taxonomy" id="316058"/>
    <lineage>
        <taxon>Bacteria</taxon>
        <taxon>Pseudomonadati</taxon>
        <taxon>Pseudomonadota</taxon>
        <taxon>Alphaproteobacteria</taxon>
        <taxon>Hyphomicrobiales</taxon>
        <taxon>Nitrobacteraceae</taxon>
        <taxon>Rhodopseudomonas</taxon>
    </lineage>
</organism>
<evidence type="ECO:0000255" key="1">
    <source>
        <dbReference type="HAMAP-Rule" id="MF_00195"/>
    </source>
</evidence>
<feature type="chain" id="PRO_1000011716" description="GTPase Der">
    <location>
        <begin position="1"/>
        <end position="459"/>
    </location>
</feature>
<feature type="domain" description="EngA-type G 1">
    <location>
        <begin position="3"/>
        <end position="167"/>
    </location>
</feature>
<feature type="domain" description="EngA-type G 2">
    <location>
        <begin position="188"/>
        <end position="363"/>
    </location>
</feature>
<feature type="domain" description="KH-like" evidence="1">
    <location>
        <begin position="364"/>
        <end position="448"/>
    </location>
</feature>
<feature type="binding site" evidence="1">
    <location>
        <begin position="9"/>
        <end position="16"/>
    </location>
    <ligand>
        <name>GTP</name>
        <dbReference type="ChEBI" id="CHEBI:37565"/>
        <label>1</label>
    </ligand>
</feature>
<feature type="binding site" evidence="1">
    <location>
        <begin position="56"/>
        <end position="60"/>
    </location>
    <ligand>
        <name>GTP</name>
        <dbReference type="ChEBI" id="CHEBI:37565"/>
        <label>1</label>
    </ligand>
</feature>
<feature type="binding site" evidence="1">
    <location>
        <begin position="119"/>
        <end position="122"/>
    </location>
    <ligand>
        <name>GTP</name>
        <dbReference type="ChEBI" id="CHEBI:37565"/>
        <label>1</label>
    </ligand>
</feature>
<feature type="binding site" evidence="1">
    <location>
        <begin position="194"/>
        <end position="201"/>
    </location>
    <ligand>
        <name>GTP</name>
        <dbReference type="ChEBI" id="CHEBI:37565"/>
        <label>2</label>
    </ligand>
</feature>
<feature type="binding site" evidence="1">
    <location>
        <begin position="241"/>
        <end position="245"/>
    </location>
    <ligand>
        <name>GTP</name>
        <dbReference type="ChEBI" id="CHEBI:37565"/>
        <label>2</label>
    </ligand>
</feature>
<feature type="binding site" evidence="1">
    <location>
        <begin position="306"/>
        <end position="309"/>
    </location>
    <ligand>
        <name>GTP</name>
        <dbReference type="ChEBI" id="CHEBI:37565"/>
        <label>2</label>
    </ligand>
</feature>
<sequence length="459" mass="50724">MSFTFAIIGRPNVGKSTLFNRLVGQKLALVDDTPGVTRDRREGEGRLGDLEFTIIDTAGLDEGAKGSLTARMQQQTETAIELADALMFVFDARAGLTPNDRAFADFARRANKPVVLVANKSEGKAGGIGAMESYALGLGDPVQISAEHGEGLSELYDALRAIMPEPEVEDDDEEIDGLTEEDFSKRPIRVAIVGRPNAGKSTFINRLLGEDRLLTSPEAGTTRDSIAVEVNWKGREFRIFDTAGLRRRSRIEEKLEKLSVADALRAVRFAEVVVLMMDSQNRFEEQDLRIADLIEREGRALVIAVNKWDLVEQQGGQIAQLRADADHWLPQVRGVPIVATSGMLGEGVDRLIDAIQDAYAVWNTRVSTAALNRWFEQAVAQNPPPAVAGRRLKLNYVTQTKARPPSFVVFCSRADAVPESYLRYLVNSLRGVFKLPGTPVRITLREKANPFAHKRKRKS</sequence>
<accession>Q2IXA7</accession>
<comment type="function">
    <text evidence="1">GTPase that plays an essential role in the late steps of ribosome biogenesis.</text>
</comment>
<comment type="subunit">
    <text evidence="1">Associates with the 50S ribosomal subunit.</text>
</comment>
<comment type="similarity">
    <text evidence="1">Belongs to the TRAFAC class TrmE-Era-EngA-EngB-Septin-like GTPase superfamily. EngA (Der) GTPase family.</text>
</comment>
<keyword id="KW-0342">GTP-binding</keyword>
<keyword id="KW-0547">Nucleotide-binding</keyword>
<keyword id="KW-1185">Reference proteome</keyword>
<keyword id="KW-0677">Repeat</keyword>
<keyword id="KW-0690">Ribosome biogenesis</keyword>
<protein>
    <recommendedName>
        <fullName evidence="1">GTPase Der</fullName>
    </recommendedName>
    <alternativeName>
        <fullName evidence="1">GTP-binding protein EngA</fullName>
    </alternativeName>
</protein>
<proteinExistence type="inferred from homology"/>
<dbReference type="EMBL" id="CP000250">
    <property type="protein sequence ID" value="ABD07153.1"/>
    <property type="molecule type" value="Genomic_DNA"/>
</dbReference>
<dbReference type="RefSeq" id="WP_011441338.1">
    <property type="nucleotide sequence ID" value="NC_007778.1"/>
</dbReference>
<dbReference type="SMR" id="Q2IXA7"/>
<dbReference type="STRING" id="316058.RPB_2448"/>
<dbReference type="KEGG" id="rpb:RPB_2448"/>
<dbReference type="eggNOG" id="COG1160">
    <property type="taxonomic scope" value="Bacteria"/>
</dbReference>
<dbReference type="HOGENOM" id="CLU_016077_5_0_5"/>
<dbReference type="OrthoDB" id="9805918at2"/>
<dbReference type="Proteomes" id="UP000008809">
    <property type="component" value="Chromosome"/>
</dbReference>
<dbReference type="GO" id="GO:0005525">
    <property type="term" value="F:GTP binding"/>
    <property type="evidence" value="ECO:0007669"/>
    <property type="project" value="UniProtKB-UniRule"/>
</dbReference>
<dbReference type="GO" id="GO:0042254">
    <property type="term" value="P:ribosome biogenesis"/>
    <property type="evidence" value="ECO:0007669"/>
    <property type="project" value="UniProtKB-KW"/>
</dbReference>
<dbReference type="CDD" id="cd01894">
    <property type="entry name" value="EngA1"/>
    <property type="match status" value="1"/>
</dbReference>
<dbReference type="CDD" id="cd01895">
    <property type="entry name" value="EngA2"/>
    <property type="match status" value="1"/>
</dbReference>
<dbReference type="FunFam" id="3.30.300.20:FF:000004">
    <property type="entry name" value="GTPase Der"/>
    <property type="match status" value="1"/>
</dbReference>
<dbReference type="FunFam" id="3.40.50.300:FF:000040">
    <property type="entry name" value="GTPase Der"/>
    <property type="match status" value="1"/>
</dbReference>
<dbReference type="FunFam" id="3.40.50.300:FF:000057">
    <property type="entry name" value="GTPase Der"/>
    <property type="match status" value="1"/>
</dbReference>
<dbReference type="Gene3D" id="3.30.300.20">
    <property type="match status" value="1"/>
</dbReference>
<dbReference type="Gene3D" id="3.40.50.300">
    <property type="entry name" value="P-loop containing nucleotide triphosphate hydrolases"/>
    <property type="match status" value="2"/>
</dbReference>
<dbReference type="HAMAP" id="MF_00195">
    <property type="entry name" value="GTPase_Der"/>
    <property type="match status" value="1"/>
</dbReference>
<dbReference type="InterPro" id="IPR031166">
    <property type="entry name" value="G_ENGA"/>
</dbReference>
<dbReference type="InterPro" id="IPR006073">
    <property type="entry name" value="GTP-bd"/>
</dbReference>
<dbReference type="InterPro" id="IPR016484">
    <property type="entry name" value="GTPase_Der"/>
</dbReference>
<dbReference type="InterPro" id="IPR032859">
    <property type="entry name" value="KH_dom-like"/>
</dbReference>
<dbReference type="InterPro" id="IPR015946">
    <property type="entry name" value="KH_dom-like_a/b"/>
</dbReference>
<dbReference type="InterPro" id="IPR027417">
    <property type="entry name" value="P-loop_NTPase"/>
</dbReference>
<dbReference type="InterPro" id="IPR005225">
    <property type="entry name" value="Small_GTP-bd"/>
</dbReference>
<dbReference type="NCBIfam" id="TIGR03594">
    <property type="entry name" value="GTPase_EngA"/>
    <property type="match status" value="1"/>
</dbReference>
<dbReference type="NCBIfam" id="TIGR00231">
    <property type="entry name" value="small_GTP"/>
    <property type="match status" value="2"/>
</dbReference>
<dbReference type="PANTHER" id="PTHR43834">
    <property type="entry name" value="GTPASE DER"/>
    <property type="match status" value="1"/>
</dbReference>
<dbReference type="PANTHER" id="PTHR43834:SF6">
    <property type="entry name" value="GTPASE DER"/>
    <property type="match status" value="1"/>
</dbReference>
<dbReference type="Pfam" id="PF14714">
    <property type="entry name" value="KH_dom-like"/>
    <property type="match status" value="1"/>
</dbReference>
<dbReference type="Pfam" id="PF01926">
    <property type="entry name" value="MMR_HSR1"/>
    <property type="match status" value="2"/>
</dbReference>
<dbReference type="PIRSF" id="PIRSF006485">
    <property type="entry name" value="GTP-binding_EngA"/>
    <property type="match status" value="1"/>
</dbReference>
<dbReference type="PRINTS" id="PR00326">
    <property type="entry name" value="GTP1OBG"/>
</dbReference>
<dbReference type="SUPFAM" id="SSF52540">
    <property type="entry name" value="P-loop containing nucleoside triphosphate hydrolases"/>
    <property type="match status" value="2"/>
</dbReference>
<dbReference type="PROSITE" id="PS51712">
    <property type="entry name" value="G_ENGA"/>
    <property type="match status" value="2"/>
</dbReference>
<gene>
    <name evidence="1" type="primary">der</name>
    <name type="synonym">engA</name>
    <name type="ordered locus">RPB_2448</name>
</gene>
<name>DER_RHOP2</name>
<reference key="1">
    <citation type="submission" date="2006-01" db="EMBL/GenBank/DDBJ databases">
        <title>Complete sequence of Rhodopseudomonas palustris HaA2.</title>
        <authorList>
            <consortium name="US DOE Joint Genome Institute"/>
            <person name="Copeland A."/>
            <person name="Lucas S."/>
            <person name="Lapidus A."/>
            <person name="Barry K."/>
            <person name="Detter J.C."/>
            <person name="Glavina T."/>
            <person name="Hammon N."/>
            <person name="Israni S."/>
            <person name="Pitluck S."/>
            <person name="Chain P."/>
            <person name="Malfatti S."/>
            <person name="Shin M."/>
            <person name="Vergez L."/>
            <person name="Schmutz J."/>
            <person name="Larimer F."/>
            <person name="Land M."/>
            <person name="Hauser L."/>
            <person name="Pelletier D.A."/>
            <person name="Kyrpides N."/>
            <person name="Anderson I."/>
            <person name="Oda Y."/>
            <person name="Harwood C.S."/>
            <person name="Richardson P."/>
        </authorList>
    </citation>
    <scope>NUCLEOTIDE SEQUENCE [LARGE SCALE GENOMIC DNA]</scope>
    <source>
        <strain>HaA2</strain>
    </source>
</reference>